<evidence type="ECO:0000305" key="1"/>
<protein>
    <recommendedName>
        <fullName evidence="1">Large ribosomal subunit protein eL30</fullName>
    </recommendedName>
    <alternativeName>
        <fullName>60S ribosomal protein L30</fullName>
    </alternativeName>
</protein>
<proteinExistence type="inferred from homology"/>
<dbReference type="EMBL" id="AF227621">
    <property type="protein sequence ID" value="AAF34766.1"/>
    <property type="molecule type" value="mRNA"/>
</dbReference>
<dbReference type="SMR" id="Q9M5M6"/>
<dbReference type="GO" id="GO:1990904">
    <property type="term" value="C:ribonucleoprotein complex"/>
    <property type="evidence" value="ECO:0007669"/>
    <property type="project" value="UniProtKB-KW"/>
</dbReference>
<dbReference type="GO" id="GO:0005840">
    <property type="term" value="C:ribosome"/>
    <property type="evidence" value="ECO:0007669"/>
    <property type="project" value="UniProtKB-KW"/>
</dbReference>
<dbReference type="GO" id="GO:0003723">
    <property type="term" value="F:RNA binding"/>
    <property type="evidence" value="ECO:0007669"/>
    <property type="project" value="InterPro"/>
</dbReference>
<dbReference type="FunFam" id="3.30.1330.30:FF:000001">
    <property type="entry name" value="60S ribosomal protein L30"/>
    <property type="match status" value="1"/>
</dbReference>
<dbReference type="Gene3D" id="3.30.1330.30">
    <property type="match status" value="1"/>
</dbReference>
<dbReference type="InterPro" id="IPR039109">
    <property type="entry name" value="Ribosomal_eL30-like"/>
</dbReference>
<dbReference type="InterPro" id="IPR029064">
    <property type="entry name" value="Ribosomal_eL30-like_sf"/>
</dbReference>
<dbReference type="InterPro" id="IPR022991">
    <property type="entry name" value="Ribosomal_eL30_CS"/>
</dbReference>
<dbReference type="InterPro" id="IPR004038">
    <property type="entry name" value="Ribosomal_eL8/eL30/eS12/Gad45"/>
</dbReference>
<dbReference type="NCBIfam" id="NF002172">
    <property type="entry name" value="PRK01018.1"/>
    <property type="match status" value="1"/>
</dbReference>
<dbReference type="PANTHER" id="PTHR11449">
    <property type="entry name" value="RIBOSOMAL PROTEIN L30"/>
    <property type="match status" value="1"/>
</dbReference>
<dbReference type="Pfam" id="PF01248">
    <property type="entry name" value="Ribosomal_L7Ae"/>
    <property type="match status" value="1"/>
</dbReference>
<dbReference type="SUPFAM" id="SSF55315">
    <property type="entry name" value="L30e-like"/>
    <property type="match status" value="1"/>
</dbReference>
<dbReference type="PROSITE" id="PS00993">
    <property type="entry name" value="RIBOSOMAL_L30E_2"/>
    <property type="match status" value="1"/>
</dbReference>
<organism>
    <name type="scientific">Euphorbia esula</name>
    <name type="common">Leafy spurge</name>
    <dbReference type="NCBI Taxonomy" id="3993"/>
    <lineage>
        <taxon>Eukaryota</taxon>
        <taxon>Viridiplantae</taxon>
        <taxon>Streptophyta</taxon>
        <taxon>Embryophyta</taxon>
        <taxon>Tracheophyta</taxon>
        <taxon>Spermatophyta</taxon>
        <taxon>Magnoliopsida</taxon>
        <taxon>eudicotyledons</taxon>
        <taxon>Gunneridae</taxon>
        <taxon>Pentapetalae</taxon>
        <taxon>rosids</taxon>
        <taxon>fabids</taxon>
        <taxon>Malpighiales</taxon>
        <taxon>Euphorbiaceae</taxon>
        <taxon>Euphorbioideae</taxon>
        <taxon>Euphorbieae</taxon>
        <taxon>Euphorbia</taxon>
        <taxon>Euphorbia subgen. Esula</taxon>
        <taxon>Euphorbia sect. Esula</taxon>
    </lineage>
</organism>
<accession>Q9M5M6</accession>
<gene>
    <name type="primary">RPL30</name>
</gene>
<sequence>MVAAKKTKKTHESINSRLALVMKSGKFTLGYKTVLESLRSNKGKLIIIANNCPPLRKSEIEYYAMLAKVGVHHYNGNNVDLGTACGKYFRVCCLSIIDAGDSDIIKSIPGDH</sequence>
<feature type="chain" id="PRO_0000146132" description="Large ribosomal subunit protein eL30">
    <location>
        <begin position="1"/>
        <end position="112"/>
    </location>
</feature>
<comment type="similarity">
    <text evidence="1">Belongs to the eukaryotic ribosomal protein eL30 family.</text>
</comment>
<name>RL30_EUPES</name>
<keyword id="KW-0687">Ribonucleoprotein</keyword>
<keyword id="KW-0689">Ribosomal protein</keyword>
<reference key="1">
    <citation type="submission" date="2000-01" db="EMBL/GenBank/DDBJ databases">
        <title>Identification of mRNAs expressed in underground adventitious buds of Euphorbia esula (leafy spurge).</title>
        <authorList>
            <person name="Anderson J.V."/>
            <person name="Horvath D.P."/>
        </authorList>
    </citation>
    <scope>NUCLEOTIDE SEQUENCE [MRNA]</scope>
</reference>